<protein>
    <recommendedName>
        <fullName evidence="1">Probable GTP-binding protein EngB</fullName>
    </recommendedName>
</protein>
<organism>
    <name type="scientific">Cupriavidus taiwanensis (strain DSM 17343 / BCRC 17206 / CCUG 44338 / CIP 107171 / LMG 19424 / R1)</name>
    <name type="common">Ralstonia taiwanensis (strain LMG 19424)</name>
    <dbReference type="NCBI Taxonomy" id="977880"/>
    <lineage>
        <taxon>Bacteria</taxon>
        <taxon>Pseudomonadati</taxon>
        <taxon>Pseudomonadota</taxon>
        <taxon>Betaproteobacteria</taxon>
        <taxon>Burkholderiales</taxon>
        <taxon>Burkholderiaceae</taxon>
        <taxon>Cupriavidus</taxon>
    </lineage>
</organism>
<comment type="function">
    <text evidence="1">Necessary for normal cell division and for the maintenance of normal septation.</text>
</comment>
<comment type="cofactor">
    <cofactor evidence="1">
        <name>Mg(2+)</name>
        <dbReference type="ChEBI" id="CHEBI:18420"/>
    </cofactor>
</comment>
<comment type="similarity">
    <text evidence="1">Belongs to the TRAFAC class TrmE-Era-EngA-EngB-Septin-like GTPase superfamily. EngB GTPase family.</text>
</comment>
<accession>B3R7D7</accession>
<evidence type="ECO:0000255" key="1">
    <source>
        <dbReference type="HAMAP-Rule" id="MF_00321"/>
    </source>
</evidence>
<evidence type="ECO:0000256" key="2">
    <source>
        <dbReference type="SAM" id="MobiDB-lite"/>
    </source>
</evidence>
<reference key="1">
    <citation type="journal article" date="2008" name="Genome Res.">
        <title>Genome sequence of the beta-rhizobium Cupriavidus taiwanensis and comparative genomics of rhizobia.</title>
        <authorList>
            <person name="Amadou C."/>
            <person name="Pascal G."/>
            <person name="Mangenot S."/>
            <person name="Glew M."/>
            <person name="Bontemps C."/>
            <person name="Capela D."/>
            <person name="Carrere S."/>
            <person name="Cruveiller S."/>
            <person name="Dossat C."/>
            <person name="Lajus A."/>
            <person name="Marchetti M."/>
            <person name="Poinsot V."/>
            <person name="Rouy Z."/>
            <person name="Servin B."/>
            <person name="Saad M."/>
            <person name="Schenowitz C."/>
            <person name="Barbe V."/>
            <person name="Batut J."/>
            <person name="Medigue C."/>
            <person name="Masson-Boivin C."/>
        </authorList>
    </citation>
    <scope>NUCLEOTIDE SEQUENCE [LARGE SCALE GENOMIC DNA]</scope>
    <source>
        <strain>DSM 17343 / BCRC 17206 / CCUG 44338 / CIP 107171 / LMG 19424 / R1</strain>
    </source>
</reference>
<sequence>MSLLHQARFFITVNHLRDLPATAVPEVAFAGRSNAGKSTAINILCNQKRLAFSSRTPGRTQHINYFSVAPVKAPDPLAFLVDLPGYGYAEVSGSAKYHWQGLLSDYVQTRQQLAGLILMMDARRPFTDLDCQMVEWFLPTGRPIHVLLTKADKLTNSENAKALRETRKMLQGYAEQLETPVPMTAQLFSSLKRRGIEEAQAVIAGWLNLPEARKAEREPAAANSVPPAVPPASDPAA</sequence>
<gene>
    <name evidence="1" type="primary">engB</name>
    <name type="ordered locus">RALTA_A2912</name>
</gene>
<proteinExistence type="inferred from homology"/>
<name>ENGB_CUPTR</name>
<dbReference type="EMBL" id="CU633749">
    <property type="protein sequence ID" value="CAQ70837.1"/>
    <property type="molecule type" value="Genomic_DNA"/>
</dbReference>
<dbReference type="RefSeq" id="WP_012354128.1">
    <property type="nucleotide sequence ID" value="NC_010528.1"/>
</dbReference>
<dbReference type="SMR" id="B3R7D7"/>
<dbReference type="GeneID" id="29761441"/>
<dbReference type="KEGG" id="cti:RALTA_A2912"/>
<dbReference type="eggNOG" id="COG0218">
    <property type="taxonomic scope" value="Bacteria"/>
</dbReference>
<dbReference type="HOGENOM" id="CLU_033732_1_1_4"/>
<dbReference type="BioCyc" id="CTAI977880:RALTA_RS14195-MONOMER"/>
<dbReference type="Proteomes" id="UP000001692">
    <property type="component" value="Chromosome 1"/>
</dbReference>
<dbReference type="GO" id="GO:0005829">
    <property type="term" value="C:cytosol"/>
    <property type="evidence" value="ECO:0007669"/>
    <property type="project" value="TreeGrafter"/>
</dbReference>
<dbReference type="GO" id="GO:0005525">
    <property type="term" value="F:GTP binding"/>
    <property type="evidence" value="ECO:0007669"/>
    <property type="project" value="UniProtKB-UniRule"/>
</dbReference>
<dbReference type="GO" id="GO:0046872">
    <property type="term" value="F:metal ion binding"/>
    <property type="evidence" value="ECO:0007669"/>
    <property type="project" value="UniProtKB-KW"/>
</dbReference>
<dbReference type="GO" id="GO:0000917">
    <property type="term" value="P:division septum assembly"/>
    <property type="evidence" value="ECO:0007669"/>
    <property type="project" value="UniProtKB-KW"/>
</dbReference>
<dbReference type="CDD" id="cd01876">
    <property type="entry name" value="YihA_EngB"/>
    <property type="match status" value="1"/>
</dbReference>
<dbReference type="FunFam" id="3.40.50.300:FF:000098">
    <property type="entry name" value="Probable GTP-binding protein EngB"/>
    <property type="match status" value="1"/>
</dbReference>
<dbReference type="Gene3D" id="3.40.50.300">
    <property type="entry name" value="P-loop containing nucleotide triphosphate hydrolases"/>
    <property type="match status" value="1"/>
</dbReference>
<dbReference type="HAMAP" id="MF_00321">
    <property type="entry name" value="GTPase_EngB"/>
    <property type="match status" value="1"/>
</dbReference>
<dbReference type="InterPro" id="IPR030393">
    <property type="entry name" value="G_ENGB_dom"/>
</dbReference>
<dbReference type="InterPro" id="IPR006073">
    <property type="entry name" value="GTP-bd"/>
</dbReference>
<dbReference type="InterPro" id="IPR019987">
    <property type="entry name" value="GTP-bd_ribosome_bio_YsxC"/>
</dbReference>
<dbReference type="InterPro" id="IPR027417">
    <property type="entry name" value="P-loop_NTPase"/>
</dbReference>
<dbReference type="NCBIfam" id="TIGR03598">
    <property type="entry name" value="GTPase_YsxC"/>
    <property type="match status" value="1"/>
</dbReference>
<dbReference type="PANTHER" id="PTHR11649:SF13">
    <property type="entry name" value="ENGB-TYPE G DOMAIN-CONTAINING PROTEIN"/>
    <property type="match status" value="1"/>
</dbReference>
<dbReference type="PANTHER" id="PTHR11649">
    <property type="entry name" value="MSS1/TRME-RELATED GTP-BINDING PROTEIN"/>
    <property type="match status" value="1"/>
</dbReference>
<dbReference type="Pfam" id="PF01926">
    <property type="entry name" value="MMR_HSR1"/>
    <property type="match status" value="1"/>
</dbReference>
<dbReference type="SUPFAM" id="SSF52540">
    <property type="entry name" value="P-loop containing nucleoside triphosphate hydrolases"/>
    <property type="match status" value="1"/>
</dbReference>
<dbReference type="PROSITE" id="PS51706">
    <property type="entry name" value="G_ENGB"/>
    <property type="match status" value="1"/>
</dbReference>
<feature type="chain" id="PRO_1000115968" description="Probable GTP-binding protein EngB">
    <location>
        <begin position="1"/>
        <end position="237"/>
    </location>
</feature>
<feature type="domain" description="EngB-type G" evidence="1">
    <location>
        <begin position="23"/>
        <end position="209"/>
    </location>
</feature>
<feature type="region of interest" description="Disordered" evidence="2">
    <location>
        <begin position="214"/>
        <end position="237"/>
    </location>
</feature>
<feature type="compositionally biased region" description="Pro residues" evidence="2">
    <location>
        <begin position="227"/>
        <end position="237"/>
    </location>
</feature>
<feature type="binding site" evidence="1">
    <location>
        <begin position="31"/>
        <end position="38"/>
    </location>
    <ligand>
        <name>GTP</name>
        <dbReference type="ChEBI" id="CHEBI:37565"/>
    </ligand>
</feature>
<feature type="binding site" evidence="1">
    <location>
        <position position="38"/>
    </location>
    <ligand>
        <name>Mg(2+)</name>
        <dbReference type="ChEBI" id="CHEBI:18420"/>
    </ligand>
</feature>
<feature type="binding site" evidence="1">
    <location>
        <begin position="58"/>
        <end position="62"/>
    </location>
    <ligand>
        <name>GTP</name>
        <dbReference type="ChEBI" id="CHEBI:37565"/>
    </ligand>
</feature>
<feature type="binding site" evidence="1">
    <location>
        <position position="60"/>
    </location>
    <ligand>
        <name>Mg(2+)</name>
        <dbReference type="ChEBI" id="CHEBI:18420"/>
    </ligand>
</feature>
<feature type="binding site" evidence="1">
    <location>
        <begin position="82"/>
        <end position="85"/>
    </location>
    <ligand>
        <name>GTP</name>
        <dbReference type="ChEBI" id="CHEBI:37565"/>
    </ligand>
</feature>
<feature type="binding site" evidence="1">
    <location>
        <begin position="149"/>
        <end position="152"/>
    </location>
    <ligand>
        <name>GTP</name>
        <dbReference type="ChEBI" id="CHEBI:37565"/>
    </ligand>
</feature>
<feature type="binding site" evidence="1">
    <location>
        <begin position="187"/>
        <end position="190"/>
    </location>
    <ligand>
        <name>GTP</name>
        <dbReference type="ChEBI" id="CHEBI:37565"/>
    </ligand>
</feature>
<keyword id="KW-0131">Cell cycle</keyword>
<keyword id="KW-0132">Cell division</keyword>
<keyword id="KW-0342">GTP-binding</keyword>
<keyword id="KW-0460">Magnesium</keyword>
<keyword id="KW-0479">Metal-binding</keyword>
<keyword id="KW-0547">Nucleotide-binding</keyword>
<keyword id="KW-0717">Septation</keyword>